<reference key="1">
    <citation type="journal article" date="1995" name="Science">
        <title>Whole-genome random sequencing and assembly of Haemophilus influenzae Rd.</title>
        <authorList>
            <person name="Fleischmann R.D."/>
            <person name="Adams M.D."/>
            <person name="White O."/>
            <person name="Clayton R.A."/>
            <person name="Kirkness E.F."/>
            <person name="Kerlavage A.R."/>
            <person name="Bult C.J."/>
            <person name="Tomb J.-F."/>
            <person name="Dougherty B.A."/>
            <person name="Merrick J.M."/>
            <person name="McKenney K."/>
            <person name="Sutton G.G."/>
            <person name="FitzHugh W."/>
            <person name="Fields C.A."/>
            <person name="Gocayne J.D."/>
            <person name="Scott J.D."/>
            <person name="Shirley R."/>
            <person name="Liu L.-I."/>
            <person name="Glodek A."/>
            <person name="Kelley J.M."/>
            <person name="Weidman J.F."/>
            <person name="Phillips C.A."/>
            <person name="Spriggs T."/>
            <person name="Hedblom E."/>
            <person name="Cotton M.D."/>
            <person name="Utterback T.R."/>
            <person name="Hanna M.C."/>
            <person name="Nguyen D.T."/>
            <person name="Saudek D.M."/>
            <person name="Brandon R.C."/>
            <person name="Fine L.D."/>
            <person name="Fritchman J.L."/>
            <person name="Fuhrmann J.L."/>
            <person name="Geoghagen N.S.M."/>
            <person name="Gnehm C.L."/>
            <person name="McDonald L.A."/>
            <person name="Small K.V."/>
            <person name="Fraser C.M."/>
            <person name="Smith H.O."/>
            <person name="Venter J.C."/>
        </authorList>
    </citation>
    <scope>NUCLEOTIDE SEQUENCE [LARGE SCALE GENOMIC DNA]</scope>
    <source>
        <strain>ATCC 51907 / DSM 11121 / KW20 / Rd</strain>
    </source>
</reference>
<protein>
    <recommendedName>
        <fullName>Uncharacterized protein HI_1570</fullName>
    </recommendedName>
</protein>
<organism>
    <name type="scientific">Haemophilus influenzae (strain ATCC 51907 / DSM 11121 / KW20 / Rd)</name>
    <dbReference type="NCBI Taxonomy" id="71421"/>
    <lineage>
        <taxon>Bacteria</taxon>
        <taxon>Pseudomonadati</taxon>
        <taxon>Pseudomonadota</taxon>
        <taxon>Gammaproteobacteria</taxon>
        <taxon>Pasteurellales</taxon>
        <taxon>Pasteurellaceae</taxon>
        <taxon>Haemophilus</taxon>
    </lineage>
</organism>
<name>Y1570_HAEIN</name>
<proteinExistence type="predicted"/>
<sequence>MEVERPADKQGNREKTVGFKLPDGTIRVTDKGFDYNVGRLNYKPNLDLYPEKLAHAFAKVEMKGGEFKHDFELLAKHMAEMKQTLSPEGKKLTAEQMLQVRDSLTKNFKFAAGVLSAESKDLLKSKTGTVWLSDDTLIKQFNSRDGQDFGIDEYERCQISSMLPSIYYK</sequence>
<gene>
    <name type="ordered locus">HI_1570</name>
</gene>
<accession>P44259</accession>
<keyword id="KW-1185">Reference proteome</keyword>
<feature type="chain" id="PRO_0000078090" description="Uncharacterized protein HI_1570">
    <location>
        <begin position="1"/>
        <end position="169"/>
    </location>
</feature>
<dbReference type="EMBL" id="L42023">
    <property type="protein sequence ID" value="AAC23224.1"/>
    <property type="molecule type" value="Genomic_DNA"/>
</dbReference>
<dbReference type="PIR" id="H64036">
    <property type="entry name" value="H64036"/>
</dbReference>
<dbReference type="STRING" id="71421.HI_1570"/>
<dbReference type="EnsemblBacteria" id="AAC23224">
    <property type="protein sequence ID" value="AAC23224"/>
    <property type="gene ID" value="HI_1570"/>
</dbReference>
<dbReference type="KEGG" id="hin:HI_1570"/>
<dbReference type="eggNOG" id="COG2369">
    <property type="taxonomic scope" value="Bacteria"/>
</dbReference>
<dbReference type="HOGENOM" id="CLU_1576296_0_0_6"/>
<dbReference type="Proteomes" id="UP000000579">
    <property type="component" value="Chromosome"/>
</dbReference>